<proteinExistence type="evidence at protein level"/>
<accession>P10667</accession>
<feature type="signal peptide" evidence="1">
    <location>
        <begin position="1"/>
        <end position="20"/>
    </location>
</feature>
<feature type="chain" id="PRO_0000023468" description="Integumentary mucin A.1">
    <location>
        <begin position="21"/>
        <end position="400"/>
    </location>
</feature>
<feature type="domain" description="P-type 1" evidence="2">
    <location>
        <begin position="21"/>
        <end position="64"/>
    </location>
</feature>
<feature type="domain" description="P-type 2" evidence="2">
    <location>
        <begin position="72"/>
        <end position="115"/>
    </location>
</feature>
<feature type="repeat" description="1-1">
    <location>
        <begin position="127"/>
        <end position="135"/>
    </location>
</feature>
<feature type="repeat" description="1-2">
    <location>
        <begin position="136"/>
        <end position="144"/>
    </location>
</feature>
<feature type="repeat" description="1-3">
    <location>
        <begin position="145"/>
        <end position="153"/>
    </location>
</feature>
<feature type="repeat" description="1-4">
    <location>
        <begin position="154"/>
        <end position="162"/>
    </location>
</feature>
<feature type="repeat" description="1-5">
    <location>
        <begin position="163"/>
        <end position="171"/>
    </location>
</feature>
<feature type="repeat" description="1-6">
    <location>
        <begin position="172"/>
        <end position="180"/>
    </location>
</feature>
<feature type="repeat" description="1-7">
    <location>
        <begin position="181"/>
        <end position="189"/>
    </location>
</feature>
<feature type="repeat" description="1-8">
    <location>
        <begin position="190"/>
        <end position="198"/>
    </location>
</feature>
<feature type="repeat" description="1-9">
    <location>
        <begin position="199"/>
        <end position="207"/>
    </location>
</feature>
<feature type="repeat" description="1-10">
    <location>
        <begin position="208"/>
        <end position="216"/>
    </location>
</feature>
<feature type="repeat" description="1-11">
    <location>
        <begin position="217"/>
        <end position="225"/>
    </location>
</feature>
<feature type="repeat" description="1-12">
    <location>
        <begin position="226"/>
        <end position="234"/>
    </location>
</feature>
<feature type="repeat" description="1-13">
    <location>
        <begin position="235"/>
        <end position="243"/>
    </location>
</feature>
<feature type="repeat" description="1-14">
    <location>
        <begin position="244"/>
        <end position="252"/>
    </location>
</feature>
<feature type="repeat" description="1-15; approximate">
    <location>
        <begin position="253"/>
        <end position="261"/>
    </location>
</feature>
<feature type="repeat" description="2-1">
    <location>
        <begin position="272"/>
        <end position="275"/>
    </location>
</feature>
<feature type="repeat" description="2-2">
    <location>
        <begin position="276"/>
        <end position="279"/>
    </location>
</feature>
<feature type="repeat" description="2-3">
    <location>
        <begin position="280"/>
        <end position="283"/>
    </location>
</feature>
<feature type="repeat" description="2-4">
    <location>
        <begin position="284"/>
        <end position="287"/>
    </location>
</feature>
<feature type="repeat" description="2-5">
    <location>
        <begin position="288"/>
        <end position="291"/>
    </location>
</feature>
<feature type="repeat" description="2-6">
    <location>
        <begin position="292"/>
        <end position="295"/>
    </location>
</feature>
<feature type="repeat" description="2-7">
    <location>
        <begin position="296"/>
        <end position="299"/>
    </location>
</feature>
<feature type="domain" description="P-type 3" evidence="2">
    <location>
        <begin position="298"/>
        <end position="343"/>
    </location>
</feature>
<feature type="domain" description="P-type 4" evidence="2">
    <location>
        <begin position="351"/>
        <end position="394"/>
    </location>
</feature>
<feature type="region of interest" description="Disordered" evidence="3">
    <location>
        <begin position="122"/>
        <end position="302"/>
    </location>
</feature>
<feature type="region of interest" description="15 X 9 AA approximate tandem repeats of [AV]-[SP]-T-T-[AP]-E-T-T-T">
    <location>
        <begin position="127"/>
        <end position="261"/>
    </location>
</feature>
<feature type="region of interest" description="7 X 4 AA repeats of E-T-T-T">
    <location>
        <begin position="272"/>
        <end position="299"/>
    </location>
</feature>
<feature type="compositionally biased region" description="Low complexity" evidence="3">
    <location>
        <begin position="122"/>
        <end position="264"/>
    </location>
</feature>
<feature type="compositionally biased region" description="Low complexity" evidence="3">
    <location>
        <begin position="272"/>
        <end position="299"/>
    </location>
</feature>
<feature type="glycosylation site" description="N-linked (GlcNAc...) asparagine" evidence="1">
    <location>
        <position position="63"/>
    </location>
</feature>
<feature type="disulfide bond" evidence="2">
    <location>
        <begin position="23"/>
        <end position="49"/>
    </location>
</feature>
<feature type="disulfide bond" evidence="2">
    <location>
        <begin position="33"/>
        <end position="48"/>
    </location>
</feature>
<feature type="disulfide bond" evidence="2">
    <location>
        <begin position="43"/>
        <end position="60"/>
    </location>
</feature>
<feature type="disulfide bond" evidence="2">
    <location>
        <begin position="74"/>
        <end position="100"/>
    </location>
</feature>
<feature type="disulfide bond" evidence="2">
    <location>
        <begin position="84"/>
        <end position="99"/>
    </location>
</feature>
<feature type="disulfide bond" evidence="2">
    <location>
        <begin position="94"/>
        <end position="111"/>
    </location>
</feature>
<feature type="disulfide bond" evidence="2">
    <location>
        <begin position="312"/>
        <end position="327"/>
    </location>
</feature>
<feature type="disulfide bond" evidence="2">
    <location>
        <begin position="322"/>
        <end position="339"/>
    </location>
</feature>
<feature type="disulfide bond" evidence="2">
    <location>
        <begin position="353"/>
        <end position="379"/>
    </location>
</feature>
<feature type="disulfide bond" evidence="2">
    <location>
        <begin position="363"/>
        <end position="378"/>
    </location>
</feature>
<feature type="disulfide bond" evidence="2">
    <location>
        <begin position="373"/>
        <end position="390"/>
    </location>
</feature>
<name>MUA1_XENLA</name>
<organism>
    <name type="scientific">Xenopus laevis</name>
    <name type="common">African clawed frog</name>
    <dbReference type="NCBI Taxonomy" id="8355"/>
    <lineage>
        <taxon>Eukaryota</taxon>
        <taxon>Metazoa</taxon>
        <taxon>Chordata</taxon>
        <taxon>Craniata</taxon>
        <taxon>Vertebrata</taxon>
        <taxon>Euteleostomi</taxon>
        <taxon>Amphibia</taxon>
        <taxon>Batrachia</taxon>
        <taxon>Anura</taxon>
        <taxon>Pipoidea</taxon>
        <taxon>Pipidae</taxon>
        <taxon>Xenopodinae</taxon>
        <taxon>Xenopus</taxon>
        <taxon>Xenopus</taxon>
    </lineage>
</organism>
<dbReference type="EMBL" id="M19971">
    <property type="protein sequence ID" value="AAA49960.1"/>
    <property type="molecule type" value="mRNA"/>
</dbReference>
<dbReference type="PIR" id="A28172">
    <property type="entry name" value="A28172"/>
</dbReference>
<dbReference type="RefSeq" id="NP_001081324.1">
    <property type="nucleotide sequence ID" value="NM_001087855.1"/>
</dbReference>
<dbReference type="SMR" id="P10667"/>
<dbReference type="GeneID" id="108707399"/>
<dbReference type="AGR" id="Xenbase:XB-GENE-22164456"/>
<dbReference type="CTD" id="108707399"/>
<dbReference type="Xenbase" id="XB-GENE-22164456">
    <property type="gene designation" value="tff3.5.L"/>
</dbReference>
<dbReference type="Proteomes" id="UP000186698">
    <property type="component" value="Unplaced"/>
</dbReference>
<dbReference type="GO" id="GO:0005615">
    <property type="term" value="C:extracellular space"/>
    <property type="evidence" value="ECO:0000318"/>
    <property type="project" value="GO_Central"/>
</dbReference>
<dbReference type="GO" id="GO:0030277">
    <property type="term" value="P:maintenance of gastrointestinal epithelium"/>
    <property type="evidence" value="ECO:0000318"/>
    <property type="project" value="GO_Central"/>
</dbReference>
<dbReference type="CDD" id="cd00111">
    <property type="entry name" value="Trefoil"/>
    <property type="match status" value="4"/>
</dbReference>
<dbReference type="FunFam" id="4.10.110.10:FF:000006">
    <property type="entry name" value="Trefoil factor 1"/>
    <property type="match status" value="3"/>
</dbReference>
<dbReference type="Gene3D" id="4.10.110.10">
    <property type="entry name" value="Spasmolytic Protein, domain 1"/>
    <property type="match status" value="4"/>
</dbReference>
<dbReference type="InterPro" id="IPR017994">
    <property type="entry name" value="P_trefoil_chordata"/>
</dbReference>
<dbReference type="InterPro" id="IPR017957">
    <property type="entry name" value="P_trefoil_CS"/>
</dbReference>
<dbReference type="InterPro" id="IPR000519">
    <property type="entry name" value="P_trefoil_dom"/>
</dbReference>
<dbReference type="InterPro" id="IPR044913">
    <property type="entry name" value="P_trefoil_dom_sf"/>
</dbReference>
<dbReference type="PANTHER" id="PTHR13826:SF19">
    <property type="entry name" value="INTEGUMENTARY MUCIN A.1"/>
    <property type="match status" value="1"/>
</dbReference>
<dbReference type="PANTHER" id="PTHR13826">
    <property type="entry name" value="INTESTINAL TREFOIL FACTOR-RELATED"/>
    <property type="match status" value="1"/>
</dbReference>
<dbReference type="Pfam" id="PF00088">
    <property type="entry name" value="Trefoil"/>
    <property type="match status" value="4"/>
</dbReference>
<dbReference type="PRINTS" id="PR01217">
    <property type="entry name" value="PRICHEXTENSN"/>
</dbReference>
<dbReference type="PRINTS" id="PR00680">
    <property type="entry name" value="PTREFOIL"/>
</dbReference>
<dbReference type="SMART" id="SM00018">
    <property type="entry name" value="PD"/>
    <property type="match status" value="4"/>
</dbReference>
<dbReference type="SUPFAM" id="SSF57492">
    <property type="entry name" value="Trefoil"/>
    <property type="match status" value="4"/>
</dbReference>
<dbReference type="PROSITE" id="PS00025">
    <property type="entry name" value="P_TREFOIL_1"/>
    <property type="match status" value="3"/>
</dbReference>
<dbReference type="PROSITE" id="PS51448">
    <property type="entry name" value="P_TREFOIL_2"/>
    <property type="match status" value="4"/>
</dbReference>
<protein>
    <recommendedName>
        <fullName>Integumentary mucin A.1</fullName>
    </recommendedName>
    <alternativeName>
        <fullName>FIM-A.1</fullName>
    </alternativeName>
    <alternativeName>
        <fullName>Preprospasmolysin</fullName>
    </alternativeName>
</protein>
<keyword id="KW-1015">Disulfide bond</keyword>
<keyword id="KW-0325">Glycoprotein</keyword>
<keyword id="KW-1185">Reference proteome</keyword>
<keyword id="KW-0677">Repeat</keyword>
<keyword id="KW-0964">Secreted</keyword>
<keyword id="KW-0732">Signal</keyword>
<comment type="function">
    <text>Could be involved in defense against microbial infections. Protects the epithelia from external environment.</text>
</comment>
<comment type="subcellular location">
    <subcellularLocation>
        <location>Secreted</location>
    </subcellularLocation>
</comment>
<comment type="tissue specificity">
    <text>Expressed and stored exclusively in mature mucous glands of the skin.</text>
</comment>
<comment type="PTM">
    <text>Extensively O-glycosylated. Consist of about 70% carbohydrate and 30% protein.</text>
</comment>
<sequence length="400" mass="42641">MKHIILCIHFLLMVVGLGQAQDCSVAPNMRVNCGYPTVTEADCRAVGCCFDSSILNTKWCFYNATAGPIKKLECSGDPTKRIDCGFPRITEKQCILRGCCFDSSISGVKWCYARTVITTPAPDTTTASTTAETTTVPTTPETTTVPTTPETTTVPTTPETTTVPTTPETTTVPTTPETTTVPTTPETTTVPTTPETTTVPTTPETTTVPTTPETTTVPTTPETTTVPTTPETTTASTTAETTTVPTTPETTTEPTTTPTTDTTPPTLPPTPETTTETTTETTTETTTETTTETTTETTTAPPPECAADRVDCGYSGITQADCEGKGCIFDSTIPETKWCFYTEAEAPARKAECTVDPSVRTDCGYPGITDKECREKGCCYDECIPDVIWCFEKAVPVVNS</sequence>
<evidence type="ECO:0000255" key="1"/>
<evidence type="ECO:0000255" key="2">
    <source>
        <dbReference type="PROSITE-ProRule" id="PRU00779"/>
    </source>
</evidence>
<evidence type="ECO:0000256" key="3">
    <source>
        <dbReference type="SAM" id="MobiDB-lite"/>
    </source>
</evidence>
<reference key="1">
    <citation type="journal article" date="1988" name="J. Biol. Chem.">
        <title>A new repetitive protein from Xenopus laevis skin highly homologous to pancreatic spasmolytic polypeptide.</title>
        <authorList>
            <person name="Hoffmann W."/>
        </authorList>
    </citation>
    <scope>NUCLEOTIDE SEQUENCE [MRNA]</scope>
    <source>
        <tissue>Skin</tissue>
    </source>
</reference>
<reference key="2">
    <citation type="journal article" date="1990" name="Exp. Cell Res.">
        <title>Expression of spasmolysin (FIM-A.1): an integumentary mucin from Xenopus laevis.</title>
        <authorList>
            <person name="Hauser F."/>
            <person name="Gertzen E.M."/>
            <person name="Hoffmann W."/>
        </authorList>
    </citation>
    <scope>CHARACTERIZATION</scope>
</reference>